<dbReference type="EMBL" id="CP000148">
    <property type="protein sequence ID" value="ABB31822.1"/>
    <property type="molecule type" value="Genomic_DNA"/>
</dbReference>
<dbReference type="RefSeq" id="WP_004511475.1">
    <property type="nucleotide sequence ID" value="NC_007517.1"/>
</dbReference>
<dbReference type="SMR" id="Q39VA2"/>
<dbReference type="STRING" id="269799.Gmet_1590"/>
<dbReference type="KEGG" id="gme:Gmet_1590"/>
<dbReference type="eggNOG" id="COG0184">
    <property type="taxonomic scope" value="Bacteria"/>
</dbReference>
<dbReference type="HOGENOM" id="CLU_148518_0_0_7"/>
<dbReference type="Proteomes" id="UP000007073">
    <property type="component" value="Chromosome"/>
</dbReference>
<dbReference type="GO" id="GO:0022627">
    <property type="term" value="C:cytosolic small ribosomal subunit"/>
    <property type="evidence" value="ECO:0007669"/>
    <property type="project" value="TreeGrafter"/>
</dbReference>
<dbReference type="GO" id="GO:0019843">
    <property type="term" value="F:rRNA binding"/>
    <property type="evidence" value="ECO:0007669"/>
    <property type="project" value="UniProtKB-UniRule"/>
</dbReference>
<dbReference type="GO" id="GO:0003735">
    <property type="term" value="F:structural constituent of ribosome"/>
    <property type="evidence" value="ECO:0007669"/>
    <property type="project" value="InterPro"/>
</dbReference>
<dbReference type="GO" id="GO:0006412">
    <property type="term" value="P:translation"/>
    <property type="evidence" value="ECO:0007669"/>
    <property type="project" value="UniProtKB-UniRule"/>
</dbReference>
<dbReference type="CDD" id="cd00353">
    <property type="entry name" value="Ribosomal_S15p_S13e"/>
    <property type="match status" value="1"/>
</dbReference>
<dbReference type="FunFam" id="1.10.287.10:FF:000002">
    <property type="entry name" value="30S ribosomal protein S15"/>
    <property type="match status" value="1"/>
</dbReference>
<dbReference type="Gene3D" id="6.10.250.3130">
    <property type="match status" value="1"/>
</dbReference>
<dbReference type="Gene3D" id="1.10.287.10">
    <property type="entry name" value="S15/NS1, RNA-binding"/>
    <property type="match status" value="1"/>
</dbReference>
<dbReference type="HAMAP" id="MF_01343_B">
    <property type="entry name" value="Ribosomal_uS15_B"/>
    <property type="match status" value="1"/>
</dbReference>
<dbReference type="InterPro" id="IPR000589">
    <property type="entry name" value="Ribosomal_uS15"/>
</dbReference>
<dbReference type="InterPro" id="IPR005290">
    <property type="entry name" value="Ribosomal_uS15_bac-type"/>
</dbReference>
<dbReference type="InterPro" id="IPR009068">
    <property type="entry name" value="uS15_NS1_RNA-bd_sf"/>
</dbReference>
<dbReference type="NCBIfam" id="TIGR00952">
    <property type="entry name" value="S15_bact"/>
    <property type="match status" value="1"/>
</dbReference>
<dbReference type="PANTHER" id="PTHR23321">
    <property type="entry name" value="RIBOSOMAL PROTEIN S15, BACTERIAL AND ORGANELLAR"/>
    <property type="match status" value="1"/>
</dbReference>
<dbReference type="PANTHER" id="PTHR23321:SF26">
    <property type="entry name" value="SMALL RIBOSOMAL SUBUNIT PROTEIN US15M"/>
    <property type="match status" value="1"/>
</dbReference>
<dbReference type="Pfam" id="PF00312">
    <property type="entry name" value="Ribosomal_S15"/>
    <property type="match status" value="1"/>
</dbReference>
<dbReference type="SMART" id="SM01387">
    <property type="entry name" value="Ribosomal_S15"/>
    <property type="match status" value="1"/>
</dbReference>
<dbReference type="SUPFAM" id="SSF47060">
    <property type="entry name" value="S15/NS1 RNA-binding domain"/>
    <property type="match status" value="1"/>
</dbReference>
<dbReference type="PROSITE" id="PS00362">
    <property type="entry name" value="RIBOSOMAL_S15"/>
    <property type="match status" value="1"/>
</dbReference>
<proteinExistence type="inferred from homology"/>
<keyword id="KW-1185">Reference proteome</keyword>
<keyword id="KW-0687">Ribonucleoprotein</keyword>
<keyword id="KW-0689">Ribosomal protein</keyword>
<keyword id="KW-0694">RNA-binding</keyword>
<keyword id="KW-0699">rRNA-binding</keyword>
<accession>Q39VA2</accession>
<evidence type="ECO:0000255" key="1">
    <source>
        <dbReference type="HAMAP-Rule" id="MF_01343"/>
    </source>
</evidence>
<evidence type="ECO:0000305" key="2"/>
<protein>
    <recommendedName>
        <fullName evidence="1">Small ribosomal subunit protein uS15</fullName>
    </recommendedName>
    <alternativeName>
        <fullName evidence="2">30S ribosomal protein S15</fullName>
    </alternativeName>
</protein>
<reference key="1">
    <citation type="journal article" date="2009" name="BMC Microbiol.">
        <title>The genome sequence of Geobacter metallireducens: features of metabolism, physiology and regulation common and dissimilar to Geobacter sulfurreducens.</title>
        <authorList>
            <person name="Aklujkar M."/>
            <person name="Krushkal J."/>
            <person name="DiBartolo G."/>
            <person name="Lapidus A."/>
            <person name="Land M.L."/>
            <person name="Lovley D.R."/>
        </authorList>
    </citation>
    <scope>NUCLEOTIDE SEQUENCE [LARGE SCALE GENOMIC DNA]</scope>
    <source>
        <strain>ATCC 53774 / DSM 7210 / GS-15</strain>
    </source>
</reference>
<name>RS15_GEOMG</name>
<organism>
    <name type="scientific">Geobacter metallireducens (strain ATCC 53774 / DSM 7210 / GS-15)</name>
    <dbReference type="NCBI Taxonomy" id="269799"/>
    <lineage>
        <taxon>Bacteria</taxon>
        <taxon>Pseudomonadati</taxon>
        <taxon>Thermodesulfobacteriota</taxon>
        <taxon>Desulfuromonadia</taxon>
        <taxon>Geobacterales</taxon>
        <taxon>Geobacteraceae</taxon>
        <taxon>Geobacter</taxon>
    </lineage>
</organism>
<sequence>MLVTDKKQEIITSFKRHDSDTGSPEVQIAILTERIIYLTEHFKVHKKDHHSRRGLLKIVGQRRRLLDYLKKKDVERYRAIIEKLGIRR</sequence>
<feature type="chain" id="PRO_0000255497" description="Small ribosomal subunit protein uS15">
    <location>
        <begin position="1"/>
        <end position="88"/>
    </location>
</feature>
<comment type="function">
    <text evidence="1">One of the primary rRNA binding proteins, it binds directly to 16S rRNA where it helps nucleate assembly of the platform of the 30S subunit by binding and bridging several RNA helices of the 16S rRNA.</text>
</comment>
<comment type="function">
    <text evidence="1">Forms an intersubunit bridge (bridge B4) with the 23S rRNA of the 50S subunit in the ribosome.</text>
</comment>
<comment type="subunit">
    <text evidence="1">Part of the 30S ribosomal subunit. Forms a bridge to the 50S subunit in the 70S ribosome, contacting the 23S rRNA.</text>
</comment>
<comment type="similarity">
    <text evidence="1">Belongs to the universal ribosomal protein uS15 family.</text>
</comment>
<gene>
    <name evidence="1" type="primary">rpsO</name>
    <name type="ordered locus">Gmet_1590</name>
</gene>